<feature type="chain" id="PRO_0000365937" description="ATP synthase subunit c">
    <location>
        <begin position="1"/>
        <end position="85"/>
    </location>
</feature>
<feature type="transmembrane region" description="Helical" evidence="1">
    <location>
        <begin position="10"/>
        <end position="30"/>
    </location>
</feature>
<feature type="transmembrane region" description="Helical" evidence="1">
    <location>
        <begin position="65"/>
        <end position="85"/>
    </location>
</feature>
<feature type="site" description="Reversibly protonated during proton transport" evidence="1">
    <location>
        <position position="68"/>
    </location>
</feature>
<name>ATPL_THESQ</name>
<evidence type="ECO:0000255" key="1">
    <source>
        <dbReference type="HAMAP-Rule" id="MF_01396"/>
    </source>
</evidence>
<accession>B1LBC4</accession>
<comment type="function">
    <text evidence="1">F(1)F(0) ATP synthase produces ATP from ADP in the presence of a proton or sodium gradient. F-type ATPases consist of two structural domains, F(1) containing the extramembraneous catalytic core and F(0) containing the membrane proton channel, linked together by a central stalk and a peripheral stalk. During catalysis, ATP synthesis in the catalytic domain of F(1) is coupled via a rotary mechanism of the central stalk subunits to proton translocation.</text>
</comment>
<comment type="function">
    <text evidence="1">Key component of the F(0) channel; it plays a direct role in translocation across the membrane. A homomeric c-ring of between 10-14 subunits forms the central stalk rotor element with the F(1) delta and epsilon subunits.</text>
</comment>
<comment type="subunit">
    <text evidence="1">F-type ATPases have 2 components, F(1) - the catalytic core - and F(0) - the membrane proton channel. F(1) has five subunits: alpha(3), beta(3), gamma(1), delta(1), epsilon(1). F(0) has three main subunits: a(1), b(2) and c(10-14). The alpha and beta chains form an alternating ring which encloses part of the gamma chain. F(1) is attached to F(0) by a central stalk formed by the gamma and epsilon chains, while a peripheral stalk is formed by the delta and b chains.</text>
</comment>
<comment type="subcellular location">
    <subcellularLocation>
        <location evidence="1">Cell inner membrane</location>
        <topology evidence="1">Multi-pass membrane protein</topology>
    </subcellularLocation>
</comment>
<comment type="similarity">
    <text evidence="1">Belongs to the ATPase C chain family.</text>
</comment>
<proteinExistence type="inferred from homology"/>
<sequence>MENLGDLAQGLALLGKYLGAGLCMGIGAIGPGIGEGNIGAHAMDAMARQPEMVGTITTRMLLADAVAETTGIYSLLIAFMILLVV</sequence>
<protein>
    <recommendedName>
        <fullName evidence="1">ATP synthase subunit c</fullName>
    </recommendedName>
    <alternativeName>
        <fullName evidence="1">ATP synthase F(0) sector subunit c</fullName>
    </alternativeName>
    <alternativeName>
        <fullName evidence="1">F-type ATPase subunit c</fullName>
        <shortName evidence="1">F-ATPase subunit c</shortName>
    </alternativeName>
    <alternativeName>
        <fullName evidence="1">Lipid-binding protein</fullName>
    </alternativeName>
</protein>
<dbReference type="EMBL" id="CP000969">
    <property type="protein sequence ID" value="ACB09622.1"/>
    <property type="molecule type" value="Genomic_DNA"/>
</dbReference>
<dbReference type="RefSeq" id="WP_004082074.1">
    <property type="nucleotide sequence ID" value="NC_010483.1"/>
</dbReference>
<dbReference type="SMR" id="B1LBC4"/>
<dbReference type="KEGG" id="trq:TRQ2_1278"/>
<dbReference type="HOGENOM" id="CLU_148047_2_1_0"/>
<dbReference type="Proteomes" id="UP000001687">
    <property type="component" value="Chromosome"/>
</dbReference>
<dbReference type="GO" id="GO:0005886">
    <property type="term" value="C:plasma membrane"/>
    <property type="evidence" value="ECO:0007669"/>
    <property type="project" value="UniProtKB-SubCell"/>
</dbReference>
<dbReference type="GO" id="GO:0045259">
    <property type="term" value="C:proton-transporting ATP synthase complex"/>
    <property type="evidence" value="ECO:0007669"/>
    <property type="project" value="UniProtKB-KW"/>
</dbReference>
<dbReference type="GO" id="GO:0033177">
    <property type="term" value="C:proton-transporting two-sector ATPase complex, proton-transporting domain"/>
    <property type="evidence" value="ECO:0007669"/>
    <property type="project" value="InterPro"/>
</dbReference>
<dbReference type="GO" id="GO:0008289">
    <property type="term" value="F:lipid binding"/>
    <property type="evidence" value="ECO:0007669"/>
    <property type="project" value="UniProtKB-KW"/>
</dbReference>
<dbReference type="GO" id="GO:0046933">
    <property type="term" value="F:proton-transporting ATP synthase activity, rotational mechanism"/>
    <property type="evidence" value="ECO:0007669"/>
    <property type="project" value="UniProtKB-UniRule"/>
</dbReference>
<dbReference type="CDD" id="cd18121">
    <property type="entry name" value="ATP-synt_Fo_c"/>
    <property type="match status" value="1"/>
</dbReference>
<dbReference type="FunFam" id="1.20.20.10:FF:000019">
    <property type="entry name" value="ATP synthase subunit c"/>
    <property type="match status" value="1"/>
</dbReference>
<dbReference type="Gene3D" id="1.20.20.10">
    <property type="entry name" value="F1F0 ATP synthase subunit C"/>
    <property type="match status" value="1"/>
</dbReference>
<dbReference type="HAMAP" id="MF_01396">
    <property type="entry name" value="ATP_synth_c_bact"/>
    <property type="match status" value="1"/>
</dbReference>
<dbReference type="InterPro" id="IPR005953">
    <property type="entry name" value="ATP_synth_csu_bac/chlpt"/>
</dbReference>
<dbReference type="InterPro" id="IPR000454">
    <property type="entry name" value="ATP_synth_F0_csu"/>
</dbReference>
<dbReference type="InterPro" id="IPR020537">
    <property type="entry name" value="ATP_synth_F0_csu_DDCD_BS"/>
</dbReference>
<dbReference type="InterPro" id="IPR038662">
    <property type="entry name" value="ATP_synth_F0_csu_sf"/>
</dbReference>
<dbReference type="InterPro" id="IPR002379">
    <property type="entry name" value="ATPase_proteolipid_c-like_dom"/>
</dbReference>
<dbReference type="InterPro" id="IPR035921">
    <property type="entry name" value="F/V-ATP_Csub_sf"/>
</dbReference>
<dbReference type="NCBIfam" id="TIGR01260">
    <property type="entry name" value="ATP_synt_c"/>
    <property type="match status" value="1"/>
</dbReference>
<dbReference type="NCBIfam" id="NF009999">
    <property type="entry name" value="PRK13471.1"/>
    <property type="match status" value="1"/>
</dbReference>
<dbReference type="Pfam" id="PF00137">
    <property type="entry name" value="ATP-synt_C"/>
    <property type="match status" value="1"/>
</dbReference>
<dbReference type="PRINTS" id="PR00124">
    <property type="entry name" value="ATPASEC"/>
</dbReference>
<dbReference type="SUPFAM" id="SSF81333">
    <property type="entry name" value="F1F0 ATP synthase subunit C"/>
    <property type="match status" value="1"/>
</dbReference>
<dbReference type="PROSITE" id="PS00605">
    <property type="entry name" value="ATPASE_C"/>
    <property type="match status" value="1"/>
</dbReference>
<reference key="1">
    <citation type="journal article" date="2011" name="J. Bacteriol.">
        <title>Genome sequence of Thermotoga sp. strain RQ2, a hyperthermophilic bacterium isolated from a geothermally heated region of the seafloor near Ribeira Quente, the Azores.</title>
        <authorList>
            <person name="Swithers K.S."/>
            <person name="DiPippo J.L."/>
            <person name="Bruce D.C."/>
            <person name="Detter C."/>
            <person name="Tapia R."/>
            <person name="Han S."/>
            <person name="Saunders E."/>
            <person name="Goodwin L.A."/>
            <person name="Han J."/>
            <person name="Woyke T."/>
            <person name="Pitluck S."/>
            <person name="Pennacchio L."/>
            <person name="Nolan M."/>
            <person name="Mikhailova N."/>
            <person name="Lykidis A."/>
            <person name="Land M.L."/>
            <person name="Brettin T."/>
            <person name="Stetter K.O."/>
            <person name="Nelson K.E."/>
            <person name="Gogarten J.P."/>
            <person name="Noll K.M."/>
        </authorList>
    </citation>
    <scope>NUCLEOTIDE SEQUENCE [LARGE SCALE GENOMIC DNA]</scope>
    <source>
        <strain>RQ2</strain>
    </source>
</reference>
<gene>
    <name evidence="1" type="primary">atpE</name>
    <name type="ordered locus">TRQ2_1278</name>
</gene>
<organism>
    <name type="scientific">Thermotoga sp. (strain RQ2)</name>
    <dbReference type="NCBI Taxonomy" id="126740"/>
    <lineage>
        <taxon>Bacteria</taxon>
        <taxon>Thermotogati</taxon>
        <taxon>Thermotogota</taxon>
        <taxon>Thermotogae</taxon>
        <taxon>Thermotogales</taxon>
        <taxon>Thermotogaceae</taxon>
        <taxon>Thermotoga</taxon>
    </lineage>
</organism>
<keyword id="KW-0066">ATP synthesis</keyword>
<keyword id="KW-0997">Cell inner membrane</keyword>
<keyword id="KW-1003">Cell membrane</keyword>
<keyword id="KW-0138">CF(0)</keyword>
<keyword id="KW-0375">Hydrogen ion transport</keyword>
<keyword id="KW-0406">Ion transport</keyword>
<keyword id="KW-0446">Lipid-binding</keyword>
<keyword id="KW-0472">Membrane</keyword>
<keyword id="KW-0812">Transmembrane</keyword>
<keyword id="KW-1133">Transmembrane helix</keyword>
<keyword id="KW-0813">Transport</keyword>